<evidence type="ECO:0000255" key="1">
    <source>
        <dbReference type="HAMAP-Rule" id="MF_00145"/>
    </source>
</evidence>
<organism>
    <name type="scientific">Lactobacillus delbrueckii subsp. bulgaricus (strain ATCC 11842 / DSM 20081 / BCRC 10696 / JCM 1002 / NBRC 13953 / NCIMB 11778 / NCTC 12712 / WDCM 00102 / Lb 14)</name>
    <dbReference type="NCBI Taxonomy" id="390333"/>
    <lineage>
        <taxon>Bacteria</taxon>
        <taxon>Bacillati</taxon>
        <taxon>Bacillota</taxon>
        <taxon>Bacilli</taxon>
        <taxon>Lactobacillales</taxon>
        <taxon>Lactobacillaceae</taxon>
        <taxon>Lactobacillus</taxon>
    </lineage>
</organism>
<feature type="chain" id="PRO_1000009620" description="Phosphoglycerate kinase">
    <location>
        <begin position="1"/>
        <end position="403"/>
    </location>
</feature>
<feature type="binding site" evidence="1">
    <location>
        <begin position="21"/>
        <end position="23"/>
    </location>
    <ligand>
        <name>substrate</name>
    </ligand>
</feature>
<feature type="binding site" evidence="1">
    <location>
        <position position="36"/>
    </location>
    <ligand>
        <name>substrate</name>
    </ligand>
</feature>
<feature type="binding site" evidence="1">
    <location>
        <begin position="59"/>
        <end position="62"/>
    </location>
    <ligand>
        <name>substrate</name>
    </ligand>
</feature>
<feature type="binding site" evidence="1">
    <location>
        <position position="119"/>
    </location>
    <ligand>
        <name>substrate</name>
    </ligand>
</feature>
<feature type="binding site" evidence="1">
    <location>
        <position position="159"/>
    </location>
    <ligand>
        <name>substrate</name>
    </ligand>
</feature>
<feature type="binding site" evidence="1">
    <location>
        <position position="214"/>
    </location>
    <ligand>
        <name>ATP</name>
        <dbReference type="ChEBI" id="CHEBI:30616"/>
    </ligand>
</feature>
<feature type="binding site" evidence="1">
    <location>
        <position position="301"/>
    </location>
    <ligand>
        <name>ATP</name>
        <dbReference type="ChEBI" id="CHEBI:30616"/>
    </ligand>
</feature>
<feature type="binding site" evidence="1">
    <location>
        <position position="332"/>
    </location>
    <ligand>
        <name>ATP</name>
        <dbReference type="ChEBI" id="CHEBI:30616"/>
    </ligand>
</feature>
<feature type="binding site" evidence="1">
    <location>
        <begin position="359"/>
        <end position="362"/>
    </location>
    <ligand>
        <name>ATP</name>
        <dbReference type="ChEBI" id="CHEBI:30616"/>
    </ligand>
</feature>
<sequence>MAKLIVSDVDVKDKKVLVRVDFNVPIKDGVIGDDNRIVAALPTIKYIIENGGKAILLSHLGRIKSDEDKKSLSLAPVAKRLGELLEKPVTFVPSNEGKEVEDAINNMKDGDVVVLENTRFQDIDNDFGKRESKNDPKLGEYWASLGDVFVNDAFGTAHRSHASNVGIATAMKAAGKPAAAGFLLEKEIKFLGNAVANPVHPFVTILGGAKVSDKIGVITNLIPKADHIIIGGGMAYTFLKAQGHNIGKSLVEDDKVEFAKELLEKAGDKLVLPIDNVAATEFNNDAASEVVGQDIPDNEMGLDIGPKTIELFKKTLEGAKTVVWNGPMGVFEMPNFAKGTLEVGRALADLPDATTIVGGGDSTAAAKQLGIAPKLTHISTGGGASLEYLEGKELPGIACVSDK</sequence>
<accession>Q1GB26</accession>
<gene>
    <name evidence="1" type="primary">pgk</name>
    <name type="ordered locus">Ldb0636</name>
</gene>
<name>PGK_LACDA</name>
<reference key="1">
    <citation type="journal article" date="2006" name="Proc. Natl. Acad. Sci. U.S.A.">
        <title>The complete genome sequence of Lactobacillus bulgaricus reveals extensive and ongoing reductive evolution.</title>
        <authorList>
            <person name="van de Guchte M."/>
            <person name="Penaud S."/>
            <person name="Grimaldi C."/>
            <person name="Barbe V."/>
            <person name="Bryson K."/>
            <person name="Nicolas P."/>
            <person name="Robert C."/>
            <person name="Oztas S."/>
            <person name="Mangenot S."/>
            <person name="Couloux A."/>
            <person name="Loux V."/>
            <person name="Dervyn R."/>
            <person name="Bossy R."/>
            <person name="Bolotin A."/>
            <person name="Batto J.-M."/>
            <person name="Walunas T."/>
            <person name="Gibrat J.-F."/>
            <person name="Bessieres P."/>
            <person name="Weissenbach J."/>
            <person name="Ehrlich S.D."/>
            <person name="Maguin E."/>
        </authorList>
    </citation>
    <scope>NUCLEOTIDE SEQUENCE [LARGE SCALE GENOMIC DNA]</scope>
    <source>
        <strain>ATCC 11842 / DSM 20081 / BCRC 10696 / JCM 1002 / NBRC 13953 / NCIMB 11778 / NCTC 12712 / WDCM 00102 / Lb 14</strain>
    </source>
</reference>
<dbReference type="EC" id="2.7.2.3" evidence="1"/>
<dbReference type="EMBL" id="CR954253">
    <property type="protein sequence ID" value="CAI97465.1"/>
    <property type="molecule type" value="Genomic_DNA"/>
</dbReference>
<dbReference type="RefSeq" id="WP_003618962.1">
    <property type="nucleotide sequence ID" value="NZ_JQAV01000001.1"/>
</dbReference>
<dbReference type="SMR" id="Q1GB26"/>
<dbReference type="STRING" id="390333.Ldb0636"/>
<dbReference type="KEGG" id="ldb:Ldb0636"/>
<dbReference type="PATRIC" id="fig|390333.13.peg.163"/>
<dbReference type="eggNOG" id="COG0126">
    <property type="taxonomic scope" value="Bacteria"/>
</dbReference>
<dbReference type="HOGENOM" id="CLU_025427_0_2_9"/>
<dbReference type="BioCyc" id="LDEL390333:LDB_RS02740-MONOMER"/>
<dbReference type="UniPathway" id="UPA00109">
    <property type="reaction ID" value="UER00185"/>
</dbReference>
<dbReference type="Proteomes" id="UP000001259">
    <property type="component" value="Chromosome"/>
</dbReference>
<dbReference type="GO" id="GO:0005829">
    <property type="term" value="C:cytosol"/>
    <property type="evidence" value="ECO:0007669"/>
    <property type="project" value="TreeGrafter"/>
</dbReference>
<dbReference type="GO" id="GO:0043531">
    <property type="term" value="F:ADP binding"/>
    <property type="evidence" value="ECO:0007669"/>
    <property type="project" value="TreeGrafter"/>
</dbReference>
<dbReference type="GO" id="GO:0005524">
    <property type="term" value="F:ATP binding"/>
    <property type="evidence" value="ECO:0007669"/>
    <property type="project" value="UniProtKB-KW"/>
</dbReference>
<dbReference type="GO" id="GO:0004618">
    <property type="term" value="F:phosphoglycerate kinase activity"/>
    <property type="evidence" value="ECO:0007669"/>
    <property type="project" value="UniProtKB-UniRule"/>
</dbReference>
<dbReference type="GO" id="GO:0006094">
    <property type="term" value="P:gluconeogenesis"/>
    <property type="evidence" value="ECO:0007669"/>
    <property type="project" value="TreeGrafter"/>
</dbReference>
<dbReference type="GO" id="GO:0006096">
    <property type="term" value="P:glycolytic process"/>
    <property type="evidence" value="ECO:0007669"/>
    <property type="project" value="UniProtKB-UniRule"/>
</dbReference>
<dbReference type="CDD" id="cd00318">
    <property type="entry name" value="Phosphoglycerate_kinase"/>
    <property type="match status" value="1"/>
</dbReference>
<dbReference type="FunFam" id="3.40.50.1260:FF:000001">
    <property type="entry name" value="Phosphoglycerate kinase"/>
    <property type="match status" value="1"/>
</dbReference>
<dbReference type="FunFam" id="3.40.50.1260:FF:000008">
    <property type="entry name" value="Phosphoglycerate kinase"/>
    <property type="match status" value="1"/>
</dbReference>
<dbReference type="Gene3D" id="3.40.50.1260">
    <property type="entry name" value="Phosphoglycerate kinase, N-terminal domain"/>
    <property type="match status" value="2"/>
</dbReference>
<dbReference type="HAMAP" id="MF_00145">
    <property type="entry name" value="Phosphoglyc_kinase"/>
    <property type="match status" value="1"/>
</dbReference>
<dbReference type="InterPro" id="IPR001576">
    <property type="entry name" value="Phosphoglycerate_kinase"/>
</dbReference>
<dbReference type="InterPro" id="IPR015911">
    <property type="entry name" value="Phosphoglycerate_kinase_CS"/>
</dbReference>
<dbReference type="InterPro" id="IPR015824">
    <property type="entry name" value="Phosphoglycerate_kinase_N"/>
</dbReference>
<dbReference type="InterPro" id="IPR036043">
    <property type="entry name" value="Phosphoglycerate_kinase_sf"/>
</dbReference>
<dbReference type="PANTHER" id="PTHR11406">
    <property type="entry name" value="PHOSPHOGLYCERATE KINASE"/>
    <property type="match status" value="1"/>
</dbReference>
<dbReference type="PANTHER" id="PTHR11406:SF23">
    <property type="entry name" value="PHOSPHOGLYCERATE KINASE 1, CHLOROPLASTIC-RELATED"/>
    <property type="match status" value="1"/>
</dbReference>
<dbReference type="Pfam" id="PF00162">
    <property type="entry name" value="PGK"/>
    <property type="match status" value="1"/>
</dbReference>
<dbReference type="PIRSF" id="PIRSF000724">
    <property type="entry name" value="Pgk"/>
    <property type="match status" value="1"/>
</dbReference>
<dbReference type="PRINTS" id="PR00477">
    <property type="entry name" value="PHGLYCKINASE"/>
</dbReference>
<dbReference type="SUPFAM" id="SSF53748">
    <property type="entry name" value="Phosphoglycerate kinase"/>
    <property type="match status" value="1"/>
</dbReference>
<dbReference type="PROSITE" id="PS00111">
    <property type="entry name" value="PGLYCERATE_KINASE"/>
    <property type="match status" value="1"/>
</dbReference>
<protein>
    <recommendedName>
        <fullName evidence="1">Phosphoglycerate kinase</fullName>
        <ecNumber evidence="1">2.7.2.3</ecNumber>
    </recommendedName>
</protein>
<proteinExistence type="inferred from homology"/>
<keyword id="KW-0067">ATP-binding</keyword>
<keyword id="KW-0963">Cytoplasm</keyword>
<keyword id="KW-0324">Glycolysis</keyword>
<keyword id="KW-0418">Kinase</keyword>
<keyword id="KW-0547">Nucleotide-binding</keyword>
<keyword id="KW-1185">Reference proteome</keyword>
<keyword id="KW-0808">Transferase</keyword>
<comment type="catalytic activity">
    <reaction evidence="1">
        <text>(2R)-3-phosphoglycerate + ATP = (2R)-3-phospho-glyceroyl phosphate + ADP</text>
        <dbReference type="Rhea" id="RHEA:14801"/>
        <dbReference type="ChEBI" id="CHEBI:30616"/>
        <dbReference type="ChEBI" id="CHEBI:57604"/>
        <dbReference type="ChEBI" id="CHEBI:58272"/>
        <dbReference type="ChEBI" id="CHEBI:456216"/>
        <dbReference type="EC" id="2.7.2.3"/>
    </reaction>
</comment>
<comment type="pathway">
    <text evidence="1">Carbohydrate degradation; glycolysis; pyruvate from D-glyceraldehyde 3-phosphate: step 2/5.</text>
</comment>
<comment type="subunit">
    <text evidence="1">Monomer.</text>
</comment>
<comment type="subcellular location">
    <subcellularLocation>
        <location evidence="1">Cytoplasm</location>
    </subcellularLocation>
</comment>
<comment type="similarity">
    <text evidence="1">Belongs to the phosphoglycerate kinase family.</text>
</comment>